<keyword id="KW-0002">3D-structure</keyword>
<keyword id="KW-0025">Alternative splicing</keyword>
<keyword id="KW-0067">ATP-binding</keyword>
<keyword id="KW-0391">Immunity</keyword>
<keyword id="KW-0399">Innate immunity</keyword>
<keyword id="KW-0418">Kinase</keyword>
<keyword id="KW-0547">Nucleotide-binding</keyword>
<keyword id="KW-0597">Phosphoprotein</keyword>
<keyword id="KW-0611">Plant defense</keyword>
<keyword id="KW-1185">Reference proteome</keyword>
<keyword id="KW-0723">Serine/threonine-protein kinase</keyword>
<keyword id="KW-0346">Stress response</keyword>
<keyword id="KW-0808">Transferase</keyword>
<accession>Q94A06</accession>
<accession>O04440</accession>
<accession>O04661</accession>
<gene>
    <name type="primary">MKK1</name>
    <name type="synonym">MEK1</name>
    <name type="ordered locus">At4g26070</name>
    <name type="ORF">F20B18.180</name>
</gene>
<sequence length="354" mass="39210">MNRGSLCPNPICLPPLEQSISKFLTQSGTFKDGDLRVNKDGIQTVSLSEPGAPPPIEPLDNQLSLADLEVIKVIGKGSSGNVQLVKHKLTQQFFALKVIQLNTEESTCRAISQELRINLSSQCPYLVSCYQSFYHNGLVSIILEFMDGGSLADLLKKVGKVPENMLSAICKRVLRGLCYIHHERRIIHRDLKPSNLLINHRGEVKITDFGVSKILTSTSSLANSFVGTYPYMSPERISGSLYSNKSDIWSLGLVLLECATGKFPYTPPEHKKGWSSVYELVDAIVENPPPCAPSNLFSPEFCSFISQCVQKDPRDRKSAKELLEHKFVKMFEDSDTNLSAYFTDAGSLIPPLAN</sequence>
<evidence type="ECO:0000250" key="1">
    <source>
        <dbReference type="UniProtKB" id="O80397"/>
    </source>
</evidence>
<evidence type="ECO:0000255" key="2">
    <source>
        <dbReference type="PROSITE-ProRule" id="PRU00159"/>
    </source>
</evidence>
<evidence type="ECO:0000255" key="3">
    <source>
        <dbReference type="PROSITE-ProRule" id="PRU10027"/>
    </source>
</evidence>
<evidence type="ECO:0000269" key="4">
    <source>
    </source>
</evidence>
<evidence type="ECO:0000269" key="5">
    <source>
    </source>
</evidence>
<evidence type="ECO:0000269" key="6">
    <source>
    </source>
</evidence>
<evidence type="ECO:0000269" key="7">
    <source>
    </source>
</evidence>
<evidence type="ECO:0000269" key="8">
    <source>
    </source>
</evidence>
<evidence type="ECO:0000269" key="9">
    <source>
    </source>
</evidence>
<evidence type="ECO:0000269" key="10">
    <source>
    </source>
</evidence>
<evidence type="ECO:0000269" key="11">
    <source>
    </source>
</evidence>
<evidence type="ECO:0000269" key="12">
    <source>
    </source>
</evidence>
<evidence type="ECO:0000269" key="13">
    <source>
    </source>
</evidence>
<evidence type="ECO:0000269" key="14">
    <source>
    </source>
</evidence>
<evidence type="ECO:0000269" key="15">
    <source>
    </source>
</evidence>
<evidence type="ECO:0000269" key="16">
    <source>
    </source>
</evidence>
<evidence type="ECO:0000269" key="17">
    <source>
    </source>
</evidence>
<evidence type="ECO:0000269" key="18">
    <source>
    </source>
</evidence>
<evidence type="ECO:0000303" key="19">
    <source>
    </source>
</evidence>
<evidence type="ECO:0000305" key="20"/>
<evidence type="ECO:0007829" key="21">
    <source>
        <dbReference type="PDB" id="7W5C"/>
    </source>
</evidence>
<name>M2K1_ARATH</name>
<comment type="function">
    <text evidence="4 9 10 11 12 13 14">MEKK1, MKK1/MKK2 and MPK4/MPK6 function in a signaling pathway that modulates the expression of genes responding to biotic and abiotic stresses and also plays an important role in pathogen defense by negatively regulating innate immunity. Activates by phosphorylation the downstream MPK4. Acts redundantly with MKK2. MKK1-MPK6 module mediates abscisic acid (ABA)-dependent CAT1 expression with H(2)O(2) production and response to drought and salt stress. MKK1-MPK6 module is also involved in sugar signaling during the process of seed germination.</text>
</comment>
<comment type="catalytic activity">
    <reaction>
        <text>L-seryl-[protein] + ATP = O-phospho-L-seryl-[protein] + ADP + H(+)</text>
        <dbReference type="Rhea" id="RHEA:17989"/>
        <dbReference type="Rhea" id="RHEA-COMP:9863"/>
        <dbReference type="Rhea" id="RHEA-COMP:11604"/>
        <dbReference type="ChEBI" id="CHEBI:15378"/>
        <dbReference type="ChEBI" id="CHEBI:29999"/>
        <dbReference type="ChEBI" id="CHEBI:30616"/>
        <dbReference type="ChEBI" id="CHEBI:83421"/>
        <dbReference type="ChEBI" id="CHEBI:456216"/>
        <dbReference type="EC" id="2.7.12.2"/>
    </reaction>
</comment>
<comment type="catalytic activity">
    <reaction>
        <text>L-threonyl-[protein] + ATP = O-phospho-L-threonyl-[protein] + ADP + H(+)</text>
        <dbReference type="Rhea" id="RHEA:46608"/>
        <dbReference type="Rhea" id="RHEA-COMP:11060"/>
        <dbReference type="Rhea" id="RHEA-COMP:11605"/>
        <dbReference type="ChEBI" id="CHEBI:15378"/>
        <dbReference type="ChEBI" id="CHEBI:30013"/>
        <dbReference type="ChEBI" id="CHEBI:30616"/>
        <dbReference type="ChEBI" id="CHEBI:61977"/>
        <dbReference type="ChEBI" id="CHEBI:456216"/>
        <dbReference type="EC" id="2.7.12.2"/>
    </reaction>
</comment>
<comment type="catalytic activity">
    <reaction>
        <text>L-tyrosyl-[protein] + ATP = O-phospho-L-tyrosyl-[protein] + ADP + H(+)</text>
        <dbReference type="Rhea" id="RHEA:10596"/>
        <dbReference type="Rhea" id="RHEA-COMP:10136"/>
        <dbReference type="Rhea" id="RHEA-COMP:20101"/>
        <dbReference type="ChEBI" id="CHEBI:15378"/>
        <dbReference type="ChEBI" id="CHEBI:30616"/>
        <dbReference type="ChEBI" id="CHEBI:46858"/>
        <dbReference type="ChEBI" id="CHEBI:61978"/>
        <dbReference type="ChEBI" id="CHEBI:456216"/>
        <dbReference type="EC" id="2.7.12.2"/>
    </reaction>
</comment>
<comment type="activity regulation">
    <text evidence="5 7 9 10">Activated through serine and threonine phosphorylation in response to wounding, cold, drought, salt stresses, abscisic acid (ABA), hydrogen peroxide, bacterial flagellin and laminarin beta-glucan.</text>
</comment>
<comment type="subunit">
    <text evidence="8 13 15 16 18">Interacts with MEKK1 and MPK4. May form a ternary complex composed of MEKK1 and MKK1/MKK2 and MPK4. Interacts with P.syringae type III effector HopF2. Interacts with MPK11.</text>
</comment>
<comment type="interaction">
    <interactant intactId="EBI-994464">
        <id>Q94A06</id>
    </interactant>
    <interactant intactId="EBI-994439">
        <id>Q39008</id>
        <label>MEKK1</label>
    </interactant>
    <organismsDiffer>false</organismsDiffer>
    <experiments>4</experiments>
</comment>
<comment type="interaction">
    <interactant intactId="EBI-994464">
        <id>Q94A06</id>
    </interactant>
    <interactant intactId="EBI-2358699">
        <id>Q9LMM5</id>
        <label>MPK11</label>
    </interactant>
    <organismsDiffer>false</organismsDiffer>
    <experiments>2</experiments>
</comment>
<comment type="interaction">
    <interactant intactId="EBI-994464">
        <id>Q94A06</id>
    </interactant>
    <interactant intactId="EBI-2128461">
        <id>Q8GYQ5</id>
        <label>MPK12</label>
    </interactant>
    <organismsDiffer>false</organismsDiffer>
    <experiments>2</experiments>
</comment>
<comment type="interaction">
    <interactant intactId="EBI-994464">
        <id>Q94A06</id>
    </interactant>
    <interactant intactId="EBI-994375">
        <id>Q39024</id>
        <label>MPK4</label>
    </interactant>
    <organismsDiffer>false</organismsDiffer>
    <experiments>11</experiments>
</comment>
<comment type="alternative products">
    <event type="alternative splicing"/>
    <isoform>
        <id>Q94A06-1</id>
        <name>1</name>
        <sequence type="displayed"/>
    </isoform>
    <isoform>
        <id>Q94A06-2</id>
        <name>2</name>
        <sequence type="described" ref="VSP_019782 VSP_019783"/>
    </isoform>
</comment>
<comment type="tissue specificity">
    <text evidence="17">Expressed in roots, stem, flowers and siliques.</text>
</comment>
<comment type="induction">
    <text evidence="17">By wounding.</text>
</comment>
<comment type="PTM">
    <text evidence="5 6 8">Phosphorylation at Thr-218 and Ser-224 by MAP kinase kinase kinases positively regulates kinase activity.</text>
</comment>
<comment type="disruption phenotype">
    <text evidence="9 11 12 13">No obvious developmental defects under normal growth conditions. Compromised in resistance to both virulent and avirulent Pseudomonas syringae strains. Reduced sensitivity to abscisic acid (ABA) during germination and reduced drought tolerance of seedlings. Simultaneous knockdown of MKK1 and MKK2 results in dwarf and small plants exhibiting a seedling-lethality phenotype.</text>
</comment>
<comment type="miscellaneous">
    <molecule>Isoform 2</molecule>
    <text evidence="20">May be due to an intron retention.</text>
</comment>
<comment type="similarity">
    <text evidence="20">Belongs to the protein kinase superfamily. STE Ser/Thr protein kinase family. MAP kinase kinase subfamily.</text>
</comment>
<protein>
    <recommendedName>
        <fullName>Mitogen-activated protein kinase kinase 1</fullName>
        <shortName>AtMKK1</shortName>
        <shortName>MAP kinase kinase 1</shortName>
        <ecNumber>2.7.12.2</ecNumber>
    </recommendedName>
    <alternativeName>
        <fullName>AtMEK1</fullName>
    </alternativeName>
    <alternativeName>
        <fullName>NMAPKK</fullName>
    </alternativeName>
</protein>
<dbReference type="EC" id="2.7.12.2"/>
<dbReference type="EMBL" id="AF000977">
    <property type="protein sequence ID" value="AAB97145.1"/>
    <property type="molecule type" value="mRNA"/>
</dbReference>
<dbReference type="EMBL" id="AB004796">
    <property type="protein sequence ID" value="BAA24079.1"/>
    <property type="molecule type" value="mRNA"/>
</dbReference>
<dbReference type="EMBL" id="AL049483">
    <property type="protein sequence ID" value="CAB39672.1"/>
    <property type="molecule type" value="Genomic_DNA"/>
</dbReference>
<dbReference type="EMBL" id="AL161564">
    <property type="protein sequence ID" value="CAB79462.1"/>
    <property type="molecule type" value="Genomic_DNA"/>
</dbReference>
<dbReference type="EMBL" id="CP002687">
    <property type="protein sequence ID" value="AEE85152.1"/>
    <property type="molecule type" value="Genomic_DNA"/>
</dbReference>
<dbReference type="EMBL" id="CP002687">
    <property type="protein sequence ID" value="AEE85153.1"/>
    <property type="molecule type" value="Genomic_DNA"/>
</dbReference>
<dbReference type="EMBL" id="CP002687">
    <property type="protein sequence ID" value="AEE85154.1"/>
    <property type="molecule type" value="Genomic_DNA"/>
</dbReference>
<dbReference type="EMBL" id="AY050774">
    <property type="protein sequence ID" value="AAK92709.1"/>
    <property type="molecule type" value="mRNA"/>
</dbReference>
<dbReference type="EMBL" id="BT001935">
    <property type="protein sequence ID" value="AAN71934.1"/>
    <property type="molecule type" value="mRNA"/>
</dbReference>
<dbReference type="EMBL" id="AY087065">
    <property type="protein sequence ID" value="AAM64626.1"/>
    <property type="molecule type" value="mRNA"/>
</dbReference>
<dbReference type="PIR" id="T04262">
    <property type="entry name" value="T04262"/>
</dbReference>
<dbReference type="RefSeq" id="NP_194337.1">
    <molecule id="Q94A06-1"/>
    <property type="nucleotide sequence ID" value="NM_118740.3"/>
</dbReference>
<dbReference type="RefSeq" id="NP_849446.1">
    <molecule id="Q94A06-2"/>
    <property type="nucleotide sequence ID" value="NM_179115.2"/>
</dbReference>
<dbReference type="RefSeq" id="NP_974619.1">
    <molecule id="Q94A06-1"/>
    <property type="nucleotide sequence ID" value="NM_202890.2"/>
</dbReference>
<dbReference type="PDB" id="7W5C">
    <property type="method" value="X-ray"/>
    <property type="resolution" value="2.20 A"/>
    <property type="chains" value="Q=187-199"/>
</dbReference>
<dbReference type="PDBsum" id="7W5C"/>
<dbReference type="SMR" id="Q94A06"/>
<dbReference type="BioGRID" id="14000">
    <property type="interactions" value="8"/>
</dbReference>
<dbReference type="FunCoup" id="Q94A06">
    <property type="interactions" value="3637"/>
</dbReference>
<dbReference type="IntAct" id="Q94A06">
    <property type="interactions" value="4"/>
</dbReference>
<dbReference type="STRING" id="3702.Q94A06"/>
<dbReference type="iPTMnet" id="Q94A06"/>
<dbReference type="PaxDb" id="3702-AT4G26070.2"/>
<dbReference type="ProteomicsDB" id="238858">
    <molecule id="Q94A06-1"/>
</dbReference>
<dbReference type="EnsemblPlants" id="AT4G26070.1">
    <molecule id="Q94A06-2"/>
    <property type="protein sequence ID" value="AT4G26070.1"/>
    <property type="gene ID" value="AT4G26070"/>
</dbReference>
<dbReference type="EnsemblPlants" id="AT4G26070.2">
    <molecule id="Q94A06-1"/>
    <property type="protein sequence ID" value="AT4G26070.2"/>
    <property type="gene ID" value="AT4G26070"/>
</dbReference>
<dbReference type="EnsemblPlants" id="AT4G26070.3">
    <molecule id="Q94A06-1"/>
    <property type="protein sequence ID" value="AT4G26070.3"/>
    <property type="gene ID" value="AT4G26070"/>
</dbReference>
<dbReference type="GeneID" id="828713"/>
<dbReference type="Gramene" id="AT4G26070.1">
    <molecule id="Q94A06-2"/>
    <property type="protein sequence ID" value="AT4G26070.1"/>
    <property type="gene ID" value="AT4G26070"/>
</dbReference>
<dbReference type="Gramene" id="AT4G26070.2">
    <molecule id="Q94A06-1"/>
    <property type="protein sequence ID" value="AT4G26070.2"/>
    <property type="gene ID" value="AT4G26070"/>
</dbReference>
<dbReference type="Gramene" id="AT4G26070.3">
    <molecule id="Q94A06-1"/>
    <property type="protein sequence ID" value="AT4G26070.3"/>
    <property type="gene ID" value="AT4G26070"/>
</dbReference>
<dbReference type="KEGG" id="ath:AT4G26070"/>
<dbReference type="Araport" id="AT4G26070"/>
<dbReference type="TAIR" id="AT4G26070">
    <property type="gene designation" value="MEK1"/>
</dbReference>
<dbReference type="eggNOG" id="KOG0581">
    <property type="taxonomic scope" value="Eukaryota"/>
</dbReference>
<dbReference type="InParanoid" id="Q94A06"/>
<dbReference type="OrthoDB" id="10252354at2759"/>
<dbReference type="PhylomeDB" id="Q94A06"/>
<dbReference type="BRENDA" id="2.7.12.2">
    <property type="organism ID" value="399"/>
</dbReference>
<dbReference type="PRO" id="PR:Q94A06"/>
<dbReference type="Proteomes" id="UP000006548">
    <property type="component" value="Chromosome 4"/>
</dbReference>
<dbReference type="ExpressionAtlas" id="Q94A06">
    <property type="expression patterns" value="baseline and differential"/>
</dbReference>
<dbReference type="GO" id="GO:0005524">
    <property type="term" value="F:ATP binding"/>
    <property type="evidence" value="ECO:0007669"/>
    <property type="project" value="UniProtKB-KW"/>
</dbReference>
<dbReference type="GO" id="GO:0004708">
    <property type="term" value="F:MAP kinase kinase activity"/>
    <property type="evidence" value="ECO:0000314"/>
    <property type="project" value="TAIR"/>
</dbReference>
<dbReference type="GO" id="GO:0106310">
    <property type="term" value="F:protein serine kinase activity"/>
    <property type="evidence" value="ECO:0007669"/>
    <property type="project" value="RHEA"/>
</dbReference>
<dbReference type="GO" id="GO:0004674">
    <property type="term" value="F:protein serine/threonine kinase activity"/>
    <property type="evidence" value="ECO:0007669"/>
    <property type="project" value="UniProtKB-KW"/>
</dbReference>
<dbReference type="GO" id="GO:0004713">
    <property type="term" value="F:protein tyrosine kinase activity"/>
    <property type="evidence" value="ECO:0007669"/>
    <property type="project" value="RHEA"/>
</dbReference>
<dbReference type="GO" id="GO:0042742">
    <property type="term" value="P:defense response to bacterium"/>
    <property type="evidence" value="ECO:0000314"/>
    <property type="project" value="TAIR"/>
</dbReference>
<dbReference type="GO" id="GO:0098542">
    <property type="term" value="P:defense response to other organism"/>
    <property type="evidence" value="ECO:0000316"/>
    <property type="project" value="TAIR"/>
</dbReference>
<dbReference type="GO" id="GO:0045087">
    <property type="term" value="P:innate immune response"/>
    <property type="evidence" value="ECO:0007669"/>
    <property type="project" value="UniProtKB-KW"/>
</dbReference>
<dbReference type="GO" id="GO:0009875">
    <property type="term" value="P:pollen-pistil interaction"/>
    <property type="evidence" value="ECO:0000316"/>
    <property type="project" value="TAIR"/>
</dbReference>
<dbReference type="GO" id="GO:0042542">
    <property type="term" value="P:response to hydrogen peroxide"/>
    <property type="evidence" value="ECO:0000314"/>
    <property type="project" value="TAIR"/>
</dbReference>
<dbReference type="GO" id="GO:0002237">
    <property type="term" value="P:response to molecule of bacterial origin"/>
    <property type="evidence" value="ECO:0000314"/>
    <property type="project" value="TAIR"/>
</dbReference>
<dbReference type="GO" id="GO:0009414">
    <property type="term" value="P:response to water deprivation"/>
    <property type="evidence" value="ECO:0000315"/>
    <property type="project" value="TAIR"/>
</dbReference>
<dbReference type="GO" id="GO:0009611">
    <property type="term" value="P:response to wounding"/>
    <property type="evidence" value="ECO:0000270"/>
    <property type="project" value="TAIR"/>
</dbReference>
<dbReference type="CDD" id="cd06623">
    <property type="entry name" value="PKc_MAPKK_plant_like"/>
    <property type="match status" value="1"/>
</dbReference>
<dbReference type="FunFam" id="3.30.200.20:FF:000716">
    <property type="entry name" value="Mitogen-activated protein kinase kinase 1"/>
    <property type="match status" value="1"/>
</dbReference>
<dbReference type="FunFam" id="1.10.510.10:FF:000285">
    <property type="entry name" value="Mitogen-activated protein kinase kinase 6"/>
    <property type="match status" value="1"/>
</dbReference>
<dbReference type="Gene3D" id="3.30.200.20">
    <property type="entry name" value="Phosphorylase Kinase, domain 1"/>
    <property type="match status" value="1"/>
</dbReference>
<dbReference type="Gene3D" id="1.10.510.10">
    <property type="entry name" value="Transferase(Phosphotransferase) domain 1"/>
    <property type="match status" value="1"/>
</dbReference>
<dbReference type="InterPro" id="IPR011009">
    <property type="entry name" value="Kinase-like_dom_sf"/>
</dbReference>
<dbReference type="InterPro" id="IPR000719">
    <property type="entry name" value="Prot_kinase_dom"/>
</dbReference>
<dbReference type="InterPro" id="IPR017441">
    <property type="entry name" value="Protein_kinase_ATP_BS"/>
</dbReference>
<dbReference type="InterPro" id="IPR008271">
    <property type="entry name" value="Ser/Thr_kinase_AS"/>
</dbReference>
<dbReference type="PANTHER" id="PTHR48013">
    <property type="entry name" value="DUAL SPECIFICITY MITOGEN-ACTIVATED PROTEIN KINASE KINASE 5-RELATED"/>
    <property type="match status" value="1"/>
</dbReference>
<dbReference type="PANTHER" id="PTHR48013:SF32">
    <property type="entry name" value="MITOGEN-ACTIVATED PROTEIN KINASE KINASE 2-LIKE"/>
    <property type="match status" value="1"/>
</dbReference>
<dbReference type="Pfam" id="PF00069">
    <property type="entry name" value="Pkinase"/>
    <property type="match status" value="1"/>
</dbReference>
<dbReference type="SMART" id="SM00220">
    <property type="entry name" value="S_TKc"/>
    <property type="match status" value="1"/>
</dbReference>
<dbReference type="SUPFAM" id="SSF56112">
    <property type="entry name" value="Protein kinase-like (PK-like)"/>
    <property type="match status" value="1"/>
</dbReference>
<dbReference type="PROSITE" id="PS00107">
    <property type="entry name" value="PROTEIN_KINASE_ATP"/>
    <property type="match status" value="1"/>
</dbReference>
<dbReference type="PROSITE" id="PS50011">
    <property type="entry name" value="PROTEIN_KINASE_DOM"/>
    <property type="match status" value="1"/>
</dbReference>
<dbReference type="PROSITE" id="PS00108">
    <property type="entry name" value="PROTEIN_KINASE_ST"/>
    <property type="match status" value="1"/>
</dbReference>
<organism>
    <name type="scientific">Arabidopsis thaliana</name>
    <name type="common">Mouse-ear cress</name>
    <dbReference type="NCBI Taxonomy" id="3702"/>
    <lineage>
        <taxon>Eukaryota</taxon>
        <taxon>Viridiplantae</taxon>
        <taxon>Streptophyta</taxon>
        <taxon>Embryophyta</taxon>
        <taxon>Tracheophyta</taxon>
        <taxon>Spermatophyta</taxon>
        <taxon>Magnoliopsida</taxon>
        <taxon>eudicotyledons</taxon>
        <taxon>Gunneridae</taxon>
        <taxon>Pentapetalae</taxon>
        <taxon>rosids</taxon>
        <taxon>malvids</taxon>
        <taxon>Brassicales</taxon>
        <taxon>Brassicaceae</taxon>
        <taxon>Camelineae</taxon>
        <taxon>Arabidopsis</taxon>
    </lineage>
</organism>
<feature type="chain" id="PRO_0000245821" description="Mitogen-activated protein kinase kinase 1">
    <location>
        <begin position="1"/>
        <end position="354"/>
    </location>
</feature>
<feature type="domain" description="Protein kinase" evidence="2">
    <location>
        <begin position="68"/>
        <end position="328"/>
    </location>
</feature>
<feature type="active site" description="Proton acceptor" evidence="2 3">
    <location>
        <position position="190"/>
    </location>
</feature>
<feature type="binding site" evidence="2">
    <location>
        <begin position="74"/>
        <end position="82"/>
    </location>
    <ligand>
        <name>ATP</name>
        <dbReference type="ChEBI" id="CHEBI:30616"/>
    </ligand>
</feature>
<feature type="binding site" evidence="2">
    <location>
        <position position="97"/>
    </location>
    <ligand>
        <name>ATP</name>
        <dbReference type="ChEBI" id="CHEBI:30616"/>
    </ligand>
</feature>
<feature type="modified residue" description="Phosphothreonine" evidence="5 6 8">
    <location>
        <position position="218"/>
    </location>
</feature>
<feature type="modified residue" description="Phosphoserine" evidence="6 8">
    <location>
        <position position="224"/>
    </location>
</feature>
<feature type="modified residue" description="Phosphothreonine" evidence="1">
    <location>
        <position position="228"/>
    </location>
</feature>
<feature type="splice variant" id="VSP_019782" description="In isoform 2." evidence="19">
    <original>C</original>
    <variation>W</variation>
    <location>
        <position position="308"/>
    </location>
</feature>
<feature type="splice variant" id="VSP_019783" description="In isoform 2." evidence="19">
    <location>
        <begin position="309"/>
        <end position="354"/>
    </location>
</feature>
<feature type="mutagenesis site" description="Loss of kinase activity in vitro." evidence="8">
    <original>K</original>
    <variation>R</variation>
    <location>
        <position position="97"/>
    </location>
</feature>
<feature type="mutagenesis site" description="Loss of kinase activity in vitro; when associated with E-224." evidence="5 6 8">
    <original>T</original>
    <variation>A</variation>
    <location>
        <position position="218"/>
    </location>
</feature>
<feature type="mutagenesis site" description="Constitutively active; when associated with D-224. Increases kinase activity in vitro; when associated with E-224." evidence="5 6 8">
    <original>T</original>
    <variation>E</variation>
    <location>
        <position position="218"/>
    </location>
</feature>
<feature type="mutagenesis site" description="Increases kinase activity in vitro; when associated with E-224." evidence="5">
    <original>S</original>
    <variation>E</variation>
    <location>
        <position position="220"/>
    </location>
</feature>
<feature type="mutagenesis site" description="Constitutively active; when associated with E-218." evidence="5 6 8">
    <original>S</original>
    <variation>D</variation>
    <location>
        <position position="224"/>
    </location>
</feature>
<feature type="mutagenesis site" description="Increases kinase activity in vitro; when associated with E-218 or E-220." evidence="5 6 8">
    <original>S</original>
    <variation>E</variation>
    <location>
        <position position="224"/>
    </location>
</feature>
<feature type="turn" evidence="21">
    <location>
        <begin position="189"/>
        <end position="191"/>
    </location>
</feature>
<reference key="1">
    <citation type="journal article" date="1997" name="Plant Mol. Biol.">
        <title>Cloning and characterisation of MEK1, an Arabidopsis gene encoding a homologue of MAP kinase kinase.</title>
        <authorList>
            <person name="Morris P.C."/>
            <person name="Guerrier D."/>
            <person name="Leung J."/>
            <person name="Giraudat J."/>
        </authorList>
    </citation>
    <scope>NUCLEOTIDE SEQUENCE [MRNA] (ISOFORM 1)</scope>
    <scope>TISSUE SPECIFICITY</scope>
    <scope>INDUCTION</scope>
    <source>
        <strain>cv. Columbia</strain>
    </source>
</reference>
<reference key="2">
    <citation type="submission" date="1997-06" db="EMBL/GenBank/DDBJ databases">
        <title>Nucleotide sequence of plant mapkk subfamily.</title>
        <authorList>
            <person name="Nanmori T."/>
            <person name="Matsuoka D."/>
            <person name="Deguchi M."/>
            <person name="Ariga H."/>
        </authorList>
    </citation>
    <scope>NUCLEOTIDE SEQUENCE [MRNA] (ISOFORM 1)</scope>
</reference>
<reference key="3">
    <citation type="journal article" date="1999" name="Nature">
        <title>Sequence and analysis of chromosome 4 of the plant Arabidopsis thaliana.</title>
        <authorList>
            <person name="Mayer K.F.X."/>
            <person name="Schueller C."/>
            <person name="Wambutt R."/>
            <person name="Murphy G."/>
            <person name="Volckaert G."/>
            <person name="Pohl T."/>
            <person name="Duesterhoeft A."/>
            <person name="Stiekema W."/>
            <person name="Entian K.-D."/>
            <person name="Terryn N."/>
            <person name="Harris B."/>
            <person name="Ansorge W."/>
            <person name="Brandt P."/>
            <person name="Grivell L.A."/>
            <person name="Rieger M."/>
            <person name="Weichselgartner M."/>
            <person name="de Simone V."/>
            <person name="Obermaier B."/>
            <person name="Mache R."/>
            <person name="Mueller M."/>
            <person name="Kreis M."/>
            <person name="Delseny M."/>
            <person name="Puigdomenech P."/>
            <person name="Watson M."/>
            <person name="Schmidtheini T."/>
            <person name="Reichert B."/>
            <person name="Portetelle D."/>
            <person name="Perez-Alonso M."/>
            <person name="Boutry M."/>
            <person name="Bancroft I."/>
            <person name="Vos P."/>
            <person name="Hoheisel J."/>
            <person name="Zimmermann W."/>
            <person name="Wedler H."/>
            <person name="Ridley P."/>
            <person name="Langham S.-A."/>
            <person name="McCullagh B."/>
            <person name="Bilham L."/>
            <person name="Robben J."/>
            <person name="van der Schueren J."/>
            <person name="Grymonprez B."/>
            <person name="Chuang Y.-J."/>
            <person name="Vandenbussche F."/>
            <person name="Braeken M."/>
            <person name="Weltjens I."/>
            <person name="Voet M."/>
            <person name="Bastiaens I."/>
            <person name="Aert R."/>
            <person name="Defoor E."/>
            <person name="Weitzenegger T."/>
            <person name="Bothe G."/>
            <person name="Ramsperger U."/>
            <person name="Hilbert H."/>
            <person name="Braun M."/>
            <person name="Holzer E."/>
            <person name="Brandt A."/>
            <person name="Peters S."/>
            <person name="van Staveren M."/>
            <person name="Dirkse W."/>
            <person name="Mooijman P."/>
            <person name="Klein Lankhorst R."/>
            <person name="Rose M."/>
            <person name="Hauf J."/>
            <person name="Koetter P."/>
            <person name="Berneiser S."/>
            <person name="Hempel S."/>
            <person name="Feldpausch M."/>
            <person name="Lamberth S."/>
            <person name="Van den Daele H."/>
            <person name="De Keyser A."/>
            <person name="Buysshaert C."/>
            <person name="Gielen J."/>
            <person name="Villarroel R."/>
            <person name="De Clercq R."/>
            <person name="van Montagu M."/>
            <person name="Rogers J."/>
            <person name="Cronin A."/>
            <person name="Quail M.A."/>
            <person name="Bray-Allen S."/>
            <person name="Clark L."/>
            <person name="Doggett J."/>
            <person name="Hall S."/>
            <person name="Kay M."/>
            <person name="Lennard N."/>
            <person name="McLay K."/>
            <person name="Mayes R."/>
            <person name="Pettett A."/>
            <person name="Rajandream M.A."/>
            <person name="Lyne M."/>
            <person name="Benes V."/>
            <person name="Rechmann S."/>
            <person name="Borkova D."/>
            <person name="Bloecker H."/>
            <person name="Scharfe M."/>
            <person name="Grimm M."/>
            <person name="Loehnert T.-H."/>
            <person name="Dose S."/>
            <person name="de Haan M."/>
            <person name="Maarse A.C."/>
            <person name="Schaefer M."/>
            <person name="Mueller-Auer S."/>
            <person name="Gabel C."/>
            <person name="Fuchs M."/>
            <person name="Fartmann B."/>
            <person name="Granderath K."/>
            <person name="Dauner D."/>
            <person name="Herzl A."/>
            <person name="Neumann S."/>
            <person name="Argiriou A."/>
            <person name="Vitale D."/>
            <person name="Liguori R."/>
            <person name="Piravandi E."/>
            <person name="Massenet O."/>
            <person name="Quigley F."/>
            <person name="Clabauld G."/>
            <person name="Muendlein A."/>
            <person name="Felber R."/>
            <person name="Schnabl S."/>
            <person name="Hiller R."/>
            <person name="Schmidt W."/>
            <person name="Lecharny A."/>
            <person name="Aubourg S."/>
            <person name="Chefdor F."/>
            <person name="Cooke R."/>
            <person name="Berger C."/>
            <person name="Monfort A."/>
            <person name="Casacuberta E."/>
            <person name="Gibbons T."/>
            <person name="Weber N."/>
            <person name="Vandenbol M."/>
            <person name="Bargues M."/>
            <person name="Terol J."/>
            <person name="Torres A."/>
            <person name="Perez-Perez A."/>
            <person name="Purnelle B."/>
            <person name="Bent E."/>
            <person name="Johnson S."/>
            <person name="Tacon D."/>
            <person name="Jesse T."/>
            <person name="Heijnen L."/>
            <person name="Schwarz S."/>
            <person name="Scholler P."/>
            <person name="Heber S."/>
            <person name="Francs P."/>
            <person name="Bielke C."/>
            <person name="Frishman D."/>
            <person name="Haase D."/>
            <person name="Lemcke K."/>
            <person name="Mewes H.-W."/>
            <person name="Stocker S."/>
            <person name="Zaccaria P."/>
            <person name="Bevan M."/>
            <person name="Wilson R.K."/>
            <person name="de la Bastide M."/>
            <person name="Habermann K."/>
            <person name="Parnell L."/>
            <person name="Dedhia N."/>
            <person name="Gnoj L."/>
            <person name="Schutz K."/>
            <person name="Huang E."/>
            <person name="Spiegel L."/>
            <person name="Sekhon M."/>
            <person name="Murray J."/>
            <person name="Sheet P."/>
            <person name="Cordes M."/>
            <person name="Abu-Threideh J."/>
            <person name="Stoneking T."/>
            <person name="Kalicki J."/>
            <person name="Graves T."/>
            <person name="Harmon G."/>
            <person name="Edwards J."/>
            <person name="Latreille P."/>
            <person name="Courtney L."/>
            <person name="Cloud J."/>
            <person name="Abbott A."/>
            <person name="Scott K."/>
            <person name="Johnson D."/>
            <person name="Minx P."/>
            <person name="Bentley D."/>
            <person name="Fulton B."/>
            <person name="Miller N."/>
            <person name="Greco T."/>
            <person name="Kemp K."/>
            <person name="Kramer J."/>
            <person name="Fulton L."/>
            <person name="Mardis E."/>
            <person name="Dante M."/>
            <person name="Pepin K."/>
            <person name="Hillier L.W."/>
            <person name="Nelson J."/>
            <person name="Spieth J."/>
            <person name="Ryan E."/>
            <person name="Andrews S."/>
            <person name="Geisel C."/>
            <person name="Layman D."/>
            <person name="Du H."/>
            <person name="Ali J."/>
            <person name="Berghoff A."/>
            <person name="Jones K."/>
            <person name="Drone K."/>
            <person name="Cotton M."/>
            <person name="Joshu C."/>
            <person name="Antonoiu B."/>
            <person name="Zidanic M."/>
            <person name="Strong C."/>
            <person name="Sun H."/>
            <person name="Lamar B."/>
            <person name="Yordan C."/>
            <person name="Ma P."/>
            <person name="Zhong J."/>
            <person name="Preston R."/>
            <person name="Vil D."/>
            <person name="Shekher M."/>
            <person name="Matero A."/>
            <person name="Shah R."/>
            <person name="Swaby I.K."/>
            <person name="O'Shaughnessy A."/>
            <person name="Rodriguez M."/>
            <person name="Hoffman J."/>
            <person name="Till S."/>
            <person name="Granat S."/>
            <person name="Shohdy N."/>
            <person name="Hasegawa A."/>
            <person name="Hameed A."/>
            <person name="Lodhi M."/>
            <person name="Johnson A."/>
            <person name="Chen E."/>
            <person name="Marra M.A."/>
            <person name="Martienssen R."/>
            <person name="McCombie W.R."/>
        </authorList>
    </citation>
    <scope>NUCLEOTIDE SEQUENCE [LARGE SCALE GENOMIC DNA]</scope>
    <source>
        <strain>cv. Columbia</strain>
    </source>
</reference>
<reference key="4">
    <citation type="journal article" date="2017" name="Plant J.">
        <title>Araport11: a complete reannotation of the Arabidopsis thaliana reference genome.</title>
        <authorList>
            <person name="Cheng C.Y."/>
            <person name="Krishnakumar V."/>
            <person name="Chan A.P."/>
            <person name="Thibaud-Nissen F."/>
            <person name="Schobel S."/>
            <person name="Town C.D."/>
        </authorList>
    </citation>
    <scope>GENOME REANNOTATION</scope>
    <source>
        <strain>cv. Columbia</strain>
    </source>
</reference>
<reference key="5">
    <citation type="journal article" date="2003" name="Science">
        <title>Empirical analysis of transcriptional activity in the Arabidopsis genome.</title>
        <authorList>
            <person name="Yamada K."/>
            <person name="Lim J."/>
            <person name="Dale J.M."/>
            <person name="Chen H."/>
            <person name="Shinn P."/>
            <person name="Palm C.J."/>
            <person name="Southwick A.M."/>
            <person name="Wu H.C."/>
            <person name="Kim C.J."/>
            <person name="Nguyen M."/>
            <person name="Pham P.K."/>
            <person name="Cheuk R.F."/>
            <person name="Karlin-Newmann G."/>
            <person name="Liu S.X."/>
            <person name="Lam B."/>
            <person name="Sakano H."/>
            <person name="Wu T."/>
            <person name="Yu G."/>
            <person name="Miranda M."/>
            <person name="Quach H.L."/>
            <person name="Tripp M."/>
            <person name="Chang C.H."/>
            <person name="Lee J.M."/>
            <person name="Toriumi M.J."/>
            <person name="Chan M.M."/>
            <person name="Tang C.C."/>
            <person name="Onodera C.S."/>
            <person name="Deng J.M."/>
            <person name="Akiyama K."/>
            <person name="Ansari Y."/>
            <person name="Arakawa T."/>
            <person name="Banh J."/>
            <person name="Banno F."/>
            <person name="Bowser L."/>
            <person name="Brooks S.Y."/>
            <person name="Carninci P."/>
            <person name="Chao Q."/>
            <person name="Choy N."/>
            <person name="Enju A."/>
            <person name="Goldsmith A.D."/>
            <person name="Gurjal M."/>
            <person name="Hansen N.F."/>
            <person name="Hayashizaki Y."/>
            <person name="Johnson-Hopson C."/>
            <person name="Hsuan V.W."/>
            <person name="Iida K."/>
            <person name="Karnes M."/>
            <person name="Khan S."/>
            <person name="Koesema E."/>
            <person name="Ishida J."/>
            <person name="Jiang P.X."/>
            <person name="Jones T."/>
            <person name="Kawai J."/>
            <person name="Kamiya A."/>
            <person name="Meyers C."/>
            <person name="Nakajima M."/>
            <person name="Narusaka M."/>
            <person name="Seki M."/>
            <person name="Sakurai T."/>
            <person name="Satou M."/>
            <person name="Tamse R."/>
            <person name="Vaysberg M."/>
            <person name="Wallender E.K."/>
            <person name="Wong C."/>
            <person name="Yamamura Y."/>
            <person name="Yuan S."/>
            <person name="Shinozaki K."/>
            <person name="Davis R.W."/>
            <person name="Theologis A."/>
            <person name="Ecker J.R."/>
        </authorList>
    </citation>
    <scope>NUCLEOTIDE SEQUENCE [LARGE SCALE MRNA] (ISOFORMS 1 AND 2)</scope>
    <source>
        <strain>cv. Columbia</strain>
    </source>
</reference>
<reference key="6">
    <citation type="submission" date="2002-03" db="EMBL/GenBank/DDBJ databases">
        <title>Full-length cDNA from Arabidopsis thaliana.</title>
        <authorList>
            <person name="Brover V.V."/>
            <person name="Troukhan M.E."/>
            <person name="Alexandrov N.A."/>
            <person name="Lu Y.-P."/>
            <person name="Flavell R.B."/>
            <person name="Feldmann K.A."/>
        </authorList>
    </citation>
    <scope>NUCLEOTIDE SEQUENCE [LARGE SCALE MRNA] (ISOFORM 1)</scope>
</reference>
<reference key="7">
    <citation type="journal article" date="1998" name="Biochem. Biophys. Res. Commun.">
        <title>Isolation of ATMEKK1 (a MAP kinase kinase kinase)-interacting proteins and analysis of a MAP kinase cascade in Arabidopsis.</title>
        <authorList>
            <person name="Ichimura K."/>
            <person name="Mizoguchi T."/>
            <person name="Irie K."/>
            <person name="Morris P.C."/>
            <person name="Giraudat J."/>
            <person name="Matsumoto K."/>
            <person name="Shinozaki K."/>
        </authorList>
    </citation>
    <scope>SUBUNIT</scope>
    <scope>INTERACTION WITH MEKK1 AND MPK4</scope>
</reference>
<reference key="8">
    <citation type="journal article" date="2000" name="Plant Physiol.">
        <title>ATMPK4, an Arabidopsis homolog of mitogen-activated protein kinase, is activated in vitro by AtMEK1 through threonine phosphorylation.</title>
        <authorList>
            <person name="Huang Y."/>
            <person name="Li H."/>
            <person name="Gupta R."/>
            <person name="Morris P.C."/>
            <person name="Luan S."/>
            <person name="Kieber J.J."/>
        </authorList>
    </citation>
    <scope>FUNCTION</scope>
</reference>
<reference key="9">
    <citation type="journal article" date="2002" name="Nature">
        <title>MAP kinase signalling cascade in Arabidopsis innate immunity.</title>
        <authorList>
            <person name="Asai T."/>
            <person name="Tena G."/>
            <person name="Plotnikova J."/>
            <person name="Willmann M.R."/>
            <person name="Chiu W.-L."/>
            <person name="Gomez-Gomez L."/>
            <person name="Boller T."/>
            <person name="Ausubel F.M."/>
            <person name="Sheen J."/>
        </authorList>
    </citation>
    <scope>PHOSPHORYLATION AT THR-218 AND SER-224</scope>
    <scope>MUTAGENESIS OF THR-218 AND SER-224</scope>
</reference>
<reference key="10">
    <citation type="journal article" date="2002" name="Plant J.">
        <title>Activation of AtMEK1, an Arabidopsis mitogen-activated protein kinase kinase, in vitro and in vivo: analysis of active mutants expressed in E. coli and generation of the active form in stress response in seedlings.</title>
        <authorList>
            <person name="Matsuoka D."/>
            <person name="Nanmori T."/>
            <person name="Sato K."/>
            <person name="Fukami Y."/>
            <person name="Kikkawa U."/>
            <person name="Yasuda T."/>
        </authorList>
    </citation>
    <scope>ACTIVITY REGULATION</scope>
    <scope>PHOSPHORYLATION AT THR-218</scope>
    <scope>MUTAGENESIS OF THR-218; SER-220 AND SER-224</scope>
</reference>
<reference key="11">
    <citation type="journal article" date="2002" name="Trends Plant Sci.">
        <title>Mitogen-activated protein kinase cascades in plants: a new nomenclature.</title>
        <authorList>
            <consortium name="MAPK group"/>
        </authorList>
    </citation>
    <scope>GENE FAMILY</scope>
    <scope>NOMENCLATURE</scope>
</reference>
<reference key="12">
    <citation type="journal article" date="2004" name="Mol. Cell">
        <title>The MKK2 pathway mediates cold and salt stress signaling in Arabidopsis.</title>
        <authorList>
            <person name="Teige M."/>
            <person name="Scheikl E."/>
            <person name="Eulgem T."/>
            <person name="Doczi R."/>
            <person name="Ichimura K."/>
            <person name="Shinozaki K."/>
            <person name="Dangl J.L."/>
            <person name="Hirt H."/>
        </authorList>
    </citation>
    <scope>ACTIVITY REGULATION</scope>
</reference>
<reference key="13">
    <citation type="journal article" date="2006" name="Plant J.">
        <title>The Arabidopsis MAP kinase kinase MKK1 participates in defence responses to the bacterial elicitor flagellin.</title>
        <authorList>
            <person name="Meszaros T."/>
            <person name="Helfer A."/>
            <person name="Hatzimasoura E."/>
            <person name="Magyar Z."/>
            <person name="Serazetdinova L."/>
            <person name="Rios G."/>
            <person name="Bardoczy V."/>
            <person name="Teige M."/>
            <person name="Koncz C."/>
            <person name="Peck S."/>
            <person name="Bogre L."/>
        </authorList>
    </citation>
    <scope>ACTIVITY REGULATION</scope>
    <scope>FUNCTION</scope>
    <scope>DISRUPTION PHENOTYPE</scope>
</reference>
<reference key="14">
    <citation type="journal article" date="2006" name="Planta">
        <title>Activation of Arabidopsis MAPK kinase kinase (AtMEKK1) and induction of AtMEKK1-AtMEK1 pathway by wounding.</title>
        <authorList>
            <person name="Hadiarto T."/>
            <person name="Nanmori T."/>
            <person name="Matsuoka D."/>
            <person name="Iwasaki T."/>
            <person name="Sato K."/>
            <person name="Fukami Y."/>
            <person name="Azuma T."/>
            <person name="Yasuda T."/>
        </authorList>
    </citation>
    <scope>INTERACTION WITH MEKK1</scope>
    <scope>PHOSPHORYLATION AT THR-218 AND SER-224</scope>
    <scope>MUTAGENESIS OF LYS-97; THR-218 AND SER-224</scope>
</reference>
<reference key="15">
    <citation type="journal article" date="2006" name="Trends Plant Sci.">
        <title>Ancient signals: comparative genomics of plant MAPK and MAPKK gene families.</title>
        <authorList>
            <person name="Hamel L.P."/>
            <person name="Nicole M.C."/>
            <person name="Sritubtim S."/>
            <person name="Morency M.J."/>
            <person name="Ellis M."/>
            <person name="Ehlting J."/>
            <person name="Beaudoin N."/>
            <person name="Barbazuk B."/>
            <person name="Klessig D."/>
            <person name="Lee J."/>
            <person name="Martin G."/>
            <person name="Mundy J."/>
            <person name="Ohashi Y."/>
            <person name="Scheel D."/>
            <person name="Sheen J."/>
            <person name="Xing T."/>
            <person name="Zhang S."/>
            <person name="Seguin A."/>
            <person name="Ellis B.E."/>
        </authorList>
    </citation>
    <scope>GENE FAMILY</scope>
</reference>
<reference key="16">
    <citation type="journal article" date="2007" name="J. Exp. Bot.">
        <title>AtMEK1 mediates stress-induced gene expression of CAT1 catalase by triggering H2O2 production in Arabidopsis.</title>
        <authorList>
            <person name="Xing Y."/>
            <person name="Jia W."/>
            <person name="Zhang J."/>
        </authorList>
    </citation>
    <scope>FUNCTION</scope>
    <scope>ACTIVITY REGULATION</scope>
</reference>
<reference key="17">
    <citation type="journal article" date="2008" name="Cell Res.">
        <title>MEKK1, MKK1/MKK2 and MPK4 function together in a mitogen-activated protein kinase cascade to regulate innate immunity in plants.</title>
        <authorList>
            <person name="Gao M."/>
            <person name="Liu J."/>
            <person name="Bi D."/>
            <person name="Zhang Z."/>
            <person name="Cheng F."/>
            <person name="Chen S."/>
            <person name="Zhang Y."/>
        </authorList>
    </citation>
    <scope>FUNCTION</scope>
    <scope>INTERACTION WITH MEKK1 AND MPK4</scope>
    <scope>DISRUPTION PHENOTYPE</scope>
</reference>
<reference key="18">
    <citation type="journal article" date="2008" name="Plant J.">
        <title>AtMKK1 mediates ABA-induced CAT1 expression and H2O2 production via AtMPK6-coupled signaling in Arabidopsis.</title>
        <authorList>
            <person name="Xing Y."/>
            <person name="Jia W."/>
            <person name="Zhang J."/>
        </authorList>
    </citation>
    <scope>FUNCTION</scope>
    <scope>DISRUPTION PHENOTYPE</scope>
</reference>
<reference key="19">
    <citation type="journal article" date="2008" name="Plant Physiol.">
        <title>Arabidopsis mitogen-activated protein kinase kinases MKK1 and MKK2 have overlapping functions in defense signaling mediated by MEKK1, MPK4, and MKS1.</title>
        <authorList>
            <person name="Qiu J.L."/>
            <person name="Zhou L."/>
            <person name="Yun B.W."/>
            <person name="Nielsen H.B."/>
            <person name="Fiil B.K."/>
            <person name="Petersen K."/>
            <person name="Mackinlay J."/>
            <person name="Loake G.J."/>
            <person name="Mundy J."/>
            <person name="Morris P.C."/>
        </authorList>
    </citation>
    <scope>FUNCTION</scope>
    <scope>DISRUPTION PHENOTYPE</scope>
</reference>
<reference key="20">
    <citation type="journal article" date="2008" name="Plant Signal. Behav.">
        <title>Comprehensive analysis of protein-protein interactions between Arabidopsis MAPKs and MAPK kinases helps define potential MAPK signalling modules.</title>
        <authorList>
            <person name="Lee J.S."/>
            <person name="Huh K.W."/>
            <person name="Bhargava A."/>
            <person name="Ellis B.E."/>
        </authorList>
    </citation>
    <scope>INTERACTION WITH MPK4 AND MPK11</scope>
</reference>
<reference key="21">
    <citation type="journal article" date="2009" name="Plant Mol. Biol.">
        <title>AtMKK1 and AtMPK6 are involved in abscisic acid and sugar signaling in Arabidopsis seed germination.</title>
        <authorList>
            <person name="Xing Y."/>
            <person name="Jia W."/>
            <person name="Zhang J."/>
        </authorList>
    </citation>
    <scope>FUNCTION</scope>
</reference>
<reference key="22">
    <citation type="journal article" date="2010" name="Plant Cell">
        <title>A Pseudomonas syringae ADP-ribosyltransferase inhibits Arabidopsis mitogen-activated protein kinase kinases.</title>
        <authorList>
            <person name="Wang Y."/>
            <person name="Li J."/>
            <person name="Hou S."/>
            <person name="Wang X."/>
            <person name="Li Y."/>
            <person name="Ren D."/>
            <person name="Chen S."/>
            <person name="Tang X."/>
            <person name="Zhou J.M."/>
        </authorList>
    </citation>
    <scope>INTERACTION WITH P.SYRINGAE HOPF2</scope>
</reference>
<proteinExistence type="evidence at protein level"/>